<name>AI5L4_ARATH</name>
<feature type="chain" id="PRO_0000369609" description="ABSCISIC ACID-INSENSITIVE 5-like protein 4">
    <location>
        <begin position="1"/>
        <end position="392"/>
    </location>
</feature>
<feature type="domain" description="bZIP" evidence="5">
    <location>
        <begin position="311"/>
        <end position="374"/>
    </location>
</feature>
<feature type="region of interest" description="Disordered" evidence="6">
    <location>
        <begin position="1"/>
        <end position="22"/>
    </location>
</feature>
<feature type="region of interest" description="Disordered" evidence="6">
    <location>
        <begin position="266"/>
        <end position="297"/>
    </location>
</feature>
<feature type="region of interest" description="Basic motif" evidence="5">
    <location>
        <begin position="313"/>
        <end position="332"/>
    </location>
</feature>
<feature type="region of interest" description="Leucine-zipper" evidence="5">
    <location>
        <begin position="339"/>
        <end position="360"/>
    </location>
</feature>
<feature type="compositionally biased region" description="Polar residues" evidence="6">
    <location>
        <begin position="274"/>
        <end position="291"/>
    </location>
</feature>
<feature type="modified residue" description="Phosphoserine" evidence="4">
    <location>
        <position position="28"/>
    </location>
</feature>
<feature type="modified residue" description="Phosphoserine" evidence="2">
    <location>
        <position position="50"/>
    </location>
</feature>
<feature type="modified residue" description="Phosphoserine" evidence="3">
    <location>
        <position position="96"/>
    </location>
</feature>
<feature type="modified residue" description="Phosphothreonine" evidence="4">
    <location>
        <position position="135"/>
    </location>
</feature>
<organism>
    <name type="scientific">Arabidopsis thaliana</name>
    <name type="common">Mouse-ear cress</name>
    <dbReference type="NCBI Taxonomy" id="3702"/>
    <lineage>
        <taxon>Eukaryota</taxon>
        <taxon>Viridiplantae</taxon>
        <taxon>Streptophyta</taxon>
        <taxon>Embryophyta</taxon>
        <taxon>Tracheophyta</taxon>
        <taxon>Spermatophyta</taxon>
        <taxon>Magnoliopsida</taxon>
        <taxon>eudicotyledons</taxon>
        <taxon>Gunneridae</taxon>
        <taxon>Pentapetalae</taxon>
        <taxon>rosids</taxon>
        <taxon>malvids</taxon>
        <taxon>Brassicales</taxon>
        <taxon>Brassicaceae</taxon>
        <taxon>Camelineae</taxon>
        <taxon>Arabidopsis</taxon>
    </lineage>
</organism>
<accession>Q9M7Q5</accession>
<accession>Q9FX98</accession>
<keyword id="KW-0938">Abscisic acid signaling pathway</keyword>
<keyword id="KW-0010">Activator</keyword>
<keyword id="KW-0025">Alternative splicing</keyword>
<keyword id="KW-0238">DNA-binding</keyword>
<keyword id="KW-0539">Nucleus</keyword>
<keyword id="KW-0597">Phosphoprotein</keyword>
<keyword id="KW-1185">Reference proteome</keyword>
<keyword id="KW-0804">Transcription</keyword>
<keyword id="KW-0805">Transcription regulation</keyword>
<evidence type="ECO:0000250" key="1"/>
<evidence type="ECO:0000250" key="2">
    <source>
        <dbReference type="UniProtKB" id="Q9LES3"/>
    </source>
</evidence>
<evidence type="ECO:0000250" key="3">
    <source>
        <dbReference type="UniProtKB" id="Q9M7Q2"/>
    </source>
</evidence>
<evidence type="ECO:0000255" key="4"/>
<evidence type="ECO:0000255" key="5">
    <source>
        <dbReference type="PROSITE-ProRule" id="PRU00978"/>
    </source>
</evidence>
<evidence type="ECO:0000256" key="6">
    <source>
        <dbReference type="SAM" id="MobiDB-lite"/>
    </source>
</evidence>
<evidence type="ECO:0000269" key="7">
    <source>
    </source>
</evidence>
<evidence type="ECO:0000269" key="8">
    <source>
    </source>
</evidence>
<evidence type="ECO:0000269" key="9">
    <source>
    </source>
</evidence>
<evidence type="ECO:0000269" key="10">
    <source>
    </source>
</evidence>
<evidence type="ECO:0000269" key="11">
    <source>
    </source>
</evidence>
<evidence type="ECO:0000305" key="12"/>
<reference key="1">
    <citation type="journal article" date="2000" name="J. Biol. Chem.">
        <title>ABFs, a family of ABA-responsive element binding factors.</title>
        <authorList>
            <person name="Choi H.-I."/>
            <person name="Hong J.-H."/>
            <person name="Ha J.-O."/>
            <person name="Kang J.-Y."/>
            <person name="Kim S.Y."/>
        </authorList>
    </citation>
    <scope>NUCLEOTIDE SEQUENCE [MRNA]</scope>
    <scope>DNA-BINDING</scope>
    <scope>INDUCTION</scope>
    <source>
        <strain>cv. Columbia</strain>
        <tissue>Seedling</tissue>
    </source>
</reference>
<reference key="2">
    <citation type="journal article" date="2000" name="Nature">
        <title>Sequence and analysis of chromosome 1 of the plant Arabidopsis thaliana.</title>
        <authorList>
            <person name="Theologis A."/>
            <person name="Ecker J.R."/>
            <person name="Palm C.J."/>
            <person name="Federspiel N.A."/>
            <person name="Kaul S."/>
            <person name="White O."/>
            <person name="Alonso J."/>
            <person name="Altafi H."/>
            <person name="Araujo R."/>
            <person name="Bowman C.L."/>
            <person name="Brooks S.Y."/>
            <person name="Buehler E."/>
            <person name="Chan A."/>
            <person name="Chao Q."/>
            <person name="Chen H."/>
            <person name="Cheuk R.F."/>
            <person name="Chin C.W."/>
            <person name="Chung M.K."/>
            <person name="Conn L."/>
            <person name="Conway A.B."/>
            <person name="Conway A.R."/>
            <person name="Creasy T.H."/>
            <person name="Dewar K."/>
            <person name="Dunn P."/>
            <person name="Etgu P."/>
            <person name="Feldblyum T.V."/>
            <person name="Feng J.-D."/>
            <person name="Fong B."/>
            <person name="Fujii C.Y."/>
            <person name="Gill J.E."/>
            <person name="Goldsmith A.D."/>
            <person name="Haas B."/>
            <person name="Hansen N.F."/>
            <person name="Hughes B."/>
            <person name="Huizar L."/>
            <person name="Hunter J.L."/>
            <person name="Jenkins J."/>
            <person name="Johnson-Hopson C."/>
            <person name="Khan S."/>
            <person name="Khaykin E."/>
            <person name="Kim C.J."/>
            <person name="Koo H.L."/>
            <person name="Kremenetskaia I."/>
            <person name="Kurtz D.B."/>
            <person name="Kwan A."/>
            <person name="Lam B."/>
            <person name="Langin-Hooper S."/>
            <person name="Lee A."/>
            <person name="Lee J.M."/>
            <person name="Lenz C.A."/>
            <person name="Li J.H."/>
            <person name="Li Y.-P."/>
            <person name="Lin X."/>
            <person name="Liu S.X."/>
            <person name="Liu Z.A."/>
            <person name="Luros J.S."/>
            <person name="Maiti R."/>
            <person name="Marziali A."/>
            <person name="Militscher J."/>
            <person name="Miranda M."/>
            <person name="Nguyen M."/>
            <person name="Nierman W.C."/>
            <person name="Osborne B.I."/>
            <person name="Pai G."/>
            <person name="Peterson J."/>
            <person name="Pham P.K."/>
            <person name="Rizzo M."/>
            <person name="Rooney T."/>
            <person name="Rowley D."/>
            <person name="Sakano H."/>
            <person name="Salzberg S.L."/>
            <person name="Schwartz J.R."/>
            <person name="Shinn P."/>
            <person name="Southwick A.M."/>
            <person name="Sun H."/>
            <person name="Tallon L.J."/>
            <person name="Tambunga G."/>
            <person name="Toriumi M.J."/>
            <person name="Town C.D."/>
            <person name="Utterback T."/>
            <person name="Van Aken S."/>
            <person name="Vaysberg M."/>
            <person name="Vysotskaia V.S."/>
            <person name="Walker M."/>
            <person name="Wu D."/>
            <person name="Yu G."/>
            <person name="Fraser C.M."/>
            <person name="Venter J.C."/>
            <person name="Davis R.W."/>
        </authorList>
    </citation>
    <scope>NUCLEOTIDE SEQUENCE [LARGE SCALE GENOMIC DNA]</scope>
    <source>
        <strain>cv. Columbia</strain>
    </source>
</reference>
<reference key="3">
    <citation type="journal article" date="2017" name="Plant J.">
        <title>Araport11: a complete reannotation of the Arabidopsis thaliana reference genome.</title>
        <authorList>
            <person name="Cheng C.Y."/>
            <person name="Krishnakumar V."/>
            <person name="Chan A.P."/>
            <person name="Thibaud-Nissen F."/>
            <person name="Schobel S."/>
            <person name="Town C.D."/>
        </authorList>
    </citation>
    <scope>GENOME REANNOTATION</scope>
    <source>
        <strain>cv. Columbia</strain>
    </source>
</reference>
<reference key="4">
    <citation type="journal article" date="2003" name="Science">
        <title>Empirical analysis of transcriptional activity in the Arabidopsis genome.</title>
        <authorList>
            <person name="Yamada K."/>
            <person name="Lim J."/>
            <person name="Dale J.M."/>
            <person name="Chen H."/>
            <person name="Shinn P."/>
            <person name="Palm C.J."/>
            <person name="Southwick A.M."/>
            <person name="Wu H.C."/>
            <person name="Kim C.J."/>
            <person name="Nguyen M."/>
            <person name="Pham P.K."/>
            <person name="Cheuk R.F."/>
            <person name="Karlin-Newmann G."/>
            <person name="Liu S.X."/>
            <person name="Lam B."/>
            <person name="Sakano H."/>
            <person name="Wu T."/>
            <person name="Yu G."/>
            <person name="Miranda M."/>
            <person name="Quach H.L."/>
            <person name="Tripp M."/>
            <person name="Chang C.H."/>
            <person name="Lee J.M."/>
            <person name="Toriumi M.J."/>
            <person name="Chan M.M."/>
            <person name="Tang C.C."/>
            <person name="Onodera C.S."/>
            <person name="Deng J.M."/>
            <person name="Akiyama K."/>
            <person name="Ansari Y."/>
            <person name="Arakawa T."/>
            <person name="Banh J."/>
            <person name="Banno F."/>
            <person name="Bowser L."/>
            <person name="Brooks S.Y."/>
            <person name="Carninci P."/>
            <person name="Chao Q."/>
            <person name="Choy N."/>
            <person name="Enju A."/>
            <person name="Goldsmith A.D."/>
            <person name="Gurjal M."/>
            <person name="Hansen N.F."/>
            <person name="Hayashizaki Y."/>
            <person name="Johnson-Hopson C."/>
            <person name="Hsuan V.W."/>
            <person name="Iida K."/>
            <person name="Karnes M."/>
            <person name="Khan S."/>
            <person name="Koesema E."/>
            <person name="Ishida J."/>
            <person name="Jiang P.X."/>
            <person name="Jones T."/>
            <person name="Kawai J."/>
            <person name="Kamiya A."/>
            <person name="Meyers C."/>
            <person name="Nakajima M."/>
            <person name="Narusaka M."/>
            <person name="Seki M."/>
            <person name="Sakurai T."/>
            <person name="Satou M."/>
            <person name="Tamse R."/>
            <person name="Vaysberg M."/>
            <person name="Wallender E.K."/>
            <person name="Wong C."/>
            <person name="Yamamura Y."/>
            <person name="Yuan S."/>
            <person name="Shinozaki K."/>
            <person name="Davis R.W."/>
            <person name="Theologis A."/>
            <person name="Ecker J.R."/>
        </authorList>
    </citation>
    <scope>NUCLEOTIDE SEQUENCE [LARGE SCALE MRNA]</scope>
    <source>
        <strain>cv. Columbia</strain>
    </source>
</reference>
<reference key="5">
    <citation type="submission" date="2006-07" db="EMBL/GenBank/DDBJ databases">
        <title>Large-scale analysis of RIKEN Arabidopsis full-length (RAFL) cDNAs.</title>
        <authorList>
            <person name="Totoki Y."/>
            <person name="Seki M."/>
            <person name="Ishida J."/>
            <person name="Nakajima M."/>
            <person name="Enju A."/>
            <person name="Kamiya A."/>
            <person name="Narusaka M."/>
            <person name="Shin-i T."/>
            <person name="Nakagawa M."/>
            <person name="Sakamoto N."/>
            <person name="Oishi K."/>
            <person name="Kohara Y."/>
            <person name="Kobayashi M."/>
            <person name="Toyoda A."/>
            <person name="Sakaki Y."/>
            <person name="Sakurai T."/>
            <person name="Iida K."/>
            <person name="Akiyama K."/>
            <person name="Satou M."/>
            <person name="Toyoda T."/>
            <person name="Konagaya A."/>
            <person name="Carninci P."/>
            <person name="Kawai J."/>
            <person name="Hayashizaki Y."/>
            <person name="Shinozaki K."/>
        </authorList>
    </citation>
    <scope>NUCLEOTIDE SEQUENCE [LARGE SCALE MRNA]</scope>
    <source>
        <strain>cv. Columbia</strain>
    </source>
</reference>
<reference key="6">
    <citation type="journal article" date="2002" name="Trends Plant Sci.">
        <title>bZIP transcription factors in Arabidopsis.</title>
        <authorList>
            <person name="Jakoby M."/>
            <person name="Weisshaar B."/>
            <person name="Droege-Laser W."/>
            <person name="Vicente-Carbajosa J."/>
            <person name="Tiedemann J."/>
            <person name="Kroj T."/>
            <person name="Parcy F."/>
        </authorList>
    </citation>
    <scope>GENE FAMILY</scope>
    <scope>NOMENCLATURE</scope>
</reference>
<reference key="7">
    <citation type="journal article" date="2005" name="Plant Mol. Biol.">
        <title>Redundant and distinct functions of the ABA response loci ABA-INSENSITIVE(ABI)5 and ABRE-BINDING FACTOR (ABF)3.</title>
        <authorList>
            <person name="Finkelstein R.R."/>
            <person name="Gampala S.S."/>
            <person name="Lynch T.J."/>
            <person name="Thomas T.L."/>
            <person name="Rock C.D."/>
        </authorList>
    </citation>
    <scope>INTERACTION WITH ABI3</scope>
</reference>
<reference key="8">
    <citation type="journal article" date="2007" name="Plant Cell">
        <title>Identification of two protein kinases required for abscisic acid regulation of seed germination, root growth, and gene expression in Arabidopsis.</title>
        <authorList>
            <person name="Fujii H."/>
            <person name="Verslues P.E."/>
            <person name="Zhu J.-K."/>
        </authorList>
    </citation>
    <scope>PHOSPHORYLATION BY SRK2D AND SRK2I</scope>
</reference>
<reference key="9">
    <citation type="journal article" date="2007" name="Plant Cell">
        <title>Two calcium-dependent protein kinases, CPK4 and CPK11, regulate abscisic acid signal transduction in Arabidopsis.</title>
        <authorList>
            <person name="Zhu S.-Y."/>
            <person name="Yu X.-C."/>
            <person name="Wang X.-J."/>
            <person name="Zhao R."/>
            <person name="Li Y."/>
            <person name="Fan R.-C."/>
            <person name="Shang Y."/>
            <person name="Du S.-Y."/>
            <person name="Wang X.-F."/>
            <person name="Wu F.-Q."/>
            <person name="Xu Y.-H."/>
            <person name="Zhang X.-Y."/>
            <person name="Zhang D.-P."/>
        </authorList>
    </citation>
    <scope>PHOSPHORYLATION BY CPK4 AND CPK11</scope>
</reference>
<reference key="10">
    <citation type="journal article" date="2008" name="Plant Mol. Biol.">
        <title>A small plant-specific protein family of ABI five binding proteins (AFPs) regulates stress response in germinating Arabidopsis seeds and seedlings.</title>
        <authorList>
            <person name="Garcia M.E."/>
            <person name="Lynch T.J."/>
            <person name="Peeters J."/>
            <person name="Snowden C."/>
            <person name="Finkelstein R.R."/>
        </authorList>
    </citation>
    <scope>INTERACTION WITH AFP1; AFP2; AFP3 AND AFP4</scope>
</reference>
<protein>
    <recommendedName>
        <fullName>ABSCISIC ACID-INSENSITIVE 5-like protein 4</fullName>
    </recommendedName>
    <alternativeName>
        <fullName>Abscisic acid responsive elements-binding factor 1</fullName>
        <shortName>ABRE-binding factor 1</shortName>
    </alternativeName>
    <alternativeName>
        <fullName>bZIP transcription factor 35</fullName>
        <shortName>AtbZIP35</shortName>
    </alternativeName>
</protein>
<gene>
    <name type="primary">ABF1</name>
    <name type="synonym">BZIP35</name>
    <name type="ordered locus">At1g49720</name>
    <name type="ORF">F14J22.7</name>
</gene>
<dbReference type="EMBL" id="AF093544">
    <property type="protein sequence ID" value="AAF27179.1"/>
    <property type="molecule type" value="mRNA"/>
</dbReference>
<dbReference type="EMBL" id="AC011807">
    <property type="protein sequence ID" value="AAG13054.1"/>
    <property type="status" value="ALT_SEQ"/>
    <property type="molecule type" value="Genomic_DNA"/>
</dbReference>
<dbReference type="EMBL" id="CP002684">
    <property type="protein sequence ID" value="AEE32464.1"/>
    <property type="molecule type" value="Genomic_DNA"/>
</dbReference>
<dbReference type="EMBL" id="CP002684">
    <property type="protein sequence ID" value="ANM60265.1"/>
    <property type="molecule type" value="Genomic_DNA"/>
</dbReference>
<dbReference type="EMBL" id="BT008575">
    <property type="protein sequence ID" value="AAP40402.1"/>
    <property type="molecule type" value="mRNA"/>
</dbReference>
<dbReference type="EMBL" id="BT008647">
    <property type="protein sequence ID" value="AAP40462.1"/>
    <property type="molecule type" value="mRNA"/>
</dbReference>
<dbReference type="EMBL" id="AK226983">
    <property type="protein sequence ID" value="BAE99050.1"/>
    <property type="molecule type" value="mRNA"/>
</dbReference>
<dbReference type="PIR" id="G96533">
    <property type="entry name" value="G96533"/>
</dbReference>
<dbReference type="RefSeq" id="NP_001322564.1">
    <molecule id="Q9M7Q5-1"/>
    <property type="nucleotide sequence ID" value="NM_001333400.1"/>
</dbReference>
<dbReference type="RefSeq" id="NP_564551.1">
    <molecule id="Q9M7Q5-1"/>
    <property type="nucleotide sequence ID" value="NM_103859.5"/>
</dbReference>
<dbReference type="SMR" id="Q9M7Q5"/>
<dbReference type="BioGRID" id="26620">
    <property type="interactions" value="23"/>
</dbReference>
<dbReference type="FunCoup" id="Q9M7Q5">
    <property type="interactions" value="332"/>
</dbReference>
<dbReference type="IntAct" id="Q9M7Q5">
    <property type="interactions" value="9"/>
</dbReference>
<dbReference type="STRING" id="3702.Q9M7Q5"/>
<dbReference type="iPTMnet" id="Q9M7Q5"/>
<dbReference type="PaxDb" id="3702-AT1G49720.2"/>
<dbReference type="ProteomicsDB" id="245031">
    <molecule id="Q9M7Q5-1"/>
</dbReference>
<dbReference type="EnsemblPlants" id="AT1G49720.1">
    <molecule id="Q9M7Q5-1"/>
    <property type="protein sequence ID" value="AT1G49720.1"/>
    <property type="gene ID" value="AT1G49720"/>
</dbReference>
<dbReference type="EnsemblPlants" id="AT1G49720.3">
    <molecule id="Q9M7Q5-1"/>
    <property type="protein sequence ID" value="AT1G49720.3"/>
    <property type="gene ID" value="AT1G49720"/>
</dbReference>
<dbReference type="GeneID" id="841395"/>
<dbReference type="Gramene" id="AT1G49720.1">
    <molecule id="Q9M7Q5-1"/>
    <property type="protein sequence ID" value="AT1G49720.1"/>
    <property type="gene ID" value="AT1G49720"/>
</dbReference>
<dbReference type="Gramene" id="AT1G49720.3">
    <molecule id="Q9M7Q5-1"/>
    <property type="protein sequence ID" value="AT1G49720.3"/>
    <property type="gene ID" value="AT1G49720"/>
</dbReference>
<dbReference type="KEGG" id="ath:AT1G49720"/>
<dbReference type="Araport" id="AT1G49720"/>
<dbReference type="TAIR" id="AT1G49720">
    <property type="gene designation" value="ABF1"/>
</dbReference>
<dbReference type="eggNOG" id="ENOG502QPP6">
    <property type="taxonomic scope" value="Eukaryota"/>
</dbReference>
<dbReference type="HOGENOM" id="CLU_043238_1_0_1"/>
<dbReference type="InParanoid" id="Q9M7Q5"/>
<dbReference type="OMA" id="AENNAWS"/>
<dbReference type="OrthoDB" id="1927218at2759"/>
<dbReference type="PhylomeDB" id="Q9M7Q5"/>
<dbReference type="PRO" id="PR:Q9M7Q5"/>
<dbReference type="Proteomes" id="UP000006548">
    <property type="component" value="Chromosome 1"/>
</dbReference>
<dbReference type="ExpressionAtlas" id="Q9M7Q5">
    <property type="expression patterns" value="baseline and differential"/>
</dbReference>
<dbReference type="GO" id="GO:0005634">
    <property type="term" value="C:nucleus"/>
    <property type="evidence" value="ECO:0007669"/>
    <property type="project" value="UniProtKB-SubCell"/>
</dbReference>
<dbReference type="GO" id="GO:0003677">
    <property type="term" value="F:DNA binding"/>
    <property type="evidence" value="ECO:0007669"/>
    <property type="project" value="UniProtKB-KW"/>
</dbReference>
<dbReference type="GO" id="GO:0003700">
    <property type="term" value="F:DNA-binding transcription factor activity"/>
    <property type="evidence" value="ECO:0007669"/>
    <property type="project" value="InterPro"/>
</dbReference>
<dbReference type="GO" id="GO:0009738">
    <property type="term" value="P:abscisic acid-activated signaling pathway"/>
    <property type="evidence" value="ECO:0007669"/>
    <property type="project" value="UniProtKB-KW"/>
</dbReference>
<dbReference type="GO" id="GO:0045893">
    <property type="term" value="P:positive regulation of DNA-templated transcription"/>
    <property type="evidence" value="ECO:0007669"/>
    <property type="project" value="InterPro"/>
</dbReference>
<dbReference type="CDD" id="cd14707">
    <property type="entry name" value="bZIP_plant_BZIP46"/>
    <property type="match status" value="1"/>
</dbReference>
<dbReference type="Gene3D" id="1.20.5.170">
    <property type="match status" value="1"/>
</dbReference>
<dbReference type="InterPro" id="IPR004827">
    <property type="entry name" value="bZIP"/>
</dbReference>
<dbReference type="InterPro" id="IPR043452">
    <property type="entry name" value="BZIP46-like"/>
</dbReference>
<dbReference type="InterPro" id="IPR046347">
    <property type="entry name" value="bZIP_sf"/>
</dbReference>
<dbReference type="PANTHER" id="PTHR22952:SF413">
    <property type="entry name" value="ABSCISIC ACID-INSENSITIVE 5-LIKE PROTEIN 4"/>
    <property type="match status" value="1"/>
</dbReference>
<dbReference type="PANTHER" id="PTHR22952">
    <property type="entry name" value="CAMP-RESPONSE ELEMENT BINDING PROTEIN-RELATED"/>
    <property type="match status" value="1"/>
</dbReference>
<dbReference type="Pfam" id="PF00170">
    <property type="entry name" value="bZIP_1"/>
    <property type="match status" value="1"/>
</dbReference>
<dbReference type="SMART" id="SM00338">
    <property type="entry name" value="BRLZ"/>
    <property type="match status" value="1"/>
</dbReference>
<dbReference type="SUPFAM" id="SSF57959">
    <property type="entry name" value="Leucine zipper domain"/>
    <property type="match status" value="1"/>
</dbReference>
<dbReference type="PROSITE" id="PS50217">
    <property type="entry name" value="BZIP"/>
    <property type="match status" value="1"/>
</dbReference>
<dbReference type="PROSITE" id="PS00036">
    <property type="entry name" value="BZIP_BASIC"/>
    <property type="match status" value="1"/>
</dbReference>
<proteinExistence type="evidence at protein level"/>
<comment type="function">
    <text>Binds to the ABA-responsive element (ABRE). Could participate in abscisic acid-regulated gene expression.</text>
</comment>
<comment type="subunit">
    <text evidence="1 8 11">DNA-binding heterodimer (By similarity). Interacts with ABI3 and the AFP proteins AFP1, AFP2, AFP3 and AFP4.</text>
</comment>
<comment type="subcellular location">
    <subcellularLocation>
        <location evidence="5">Nucleus</location>
    </subcellularLocation>
</comment>
<comment type="alternative products">
    <event type="alternative splicing"/>
    <isoform>
        <id>Q9M7Q5-1</id>
        <name>1</name>
        <sequence type="displayed"/>
    </isoform>
    <text>A number of isoforms are produced. According to EST sequences.</text>
</comment>
<comment type="induction">
    <text evidence="7">Up-regulated by abscisic acid (ABA) and cold.</text>
</comment>
<comment type="PTM">
    <text evidence="9 10">Phosphorylated by CPK4, CPK11, SRK2D and SRK2I in vitro.</text>
</comment>
<comment type="similarity">
    <text evidence="12">Belongs to the bZIP family. ABI5 subfamily.</text>
</comment>
<comment type="sequence caution" evidence="12">
    <conflict type="erroneous gene model prediction">
        <sequence resource="EMBL-CDS" id="AAG13054"/>
    </conflict>
</comment>
<sequence length="392" mass="42728">MGTHIDINNLGGDTSRGNESKPLARQSSLYSLTFDELQSTLGEPGKDFGSMNMDELLKNIWTAEDTQAFMTTTSSVAAPGPSGFVPGGNGLQRQGSLTLPRTLSQKTVDEVWKYLNSKEGSNGNTGTDALERQQTLGEMTLEDFLLRAGVVKEDNTQQNENSSSGFYANNGAAGLEFGFGQPNQNSISFNGNNSSMIMNQAPGLGLKVGGTMQQQQQPHQQQLQQPHQRLPPTIFPKQANVTFAAPVNMVNRGLFETSADGPANSNMGGAGGTVTATSPGTSSAENNTWSSPVPYVFGRGRRSNTGLEKVVERRQKRMIKNRESAARSRARKQAYTLELEAEIESLKLVNQDLQKKQAEIMKTHNSELKEFSKQPPLLAKRQCLRRTLTGPW</sequence>